<gene>
    <name evidence="1" type="primary">rplP</name>
    <name type="ordered locus">CGSHiEE_08140</name>
</gene>
<feature type="chain" id="PRO_1000054629" description="Large ribosomal subunit protein uL16">
    <location>
        <begin position="1"/>
        <end position="136"/>
    </location>
</feature>
<accession>A5UDU0</accession>
<organism>
    <name type="scientific">Haemophilus influenzae (strain PittEE)</name>
    <dbReference type="NCBI Taxonomy" id="374930"/>
    <lineage>
        <taxon>Bacteria</taxon>
        <taxon>Pseudomonadati</taxon>
        <taxon>Pseudomonadota</taxon>
        <taxon>Gammaproteobacteria</taxon>
        <taxon>Pasteurellales</taxon>
        <taxon>Pasteurellaceae</taxon>
        <taxon>Haemophilus</taxon>
    </lineage>
</organism>
<dbReference type="EMBL" id="CP000671">
    <property type="protein sequence ID" value="ABQ98941.1"/>
    <property type="molecule type" value="Genomic_DNA"/>
</dbReference>
<dbReference type="SMR" id="A5UDU0"/>
<dbReference type="KEGG" id="hip:CGSHiEE_08140"/>
<dbReference type="HOGENOM" id="CLU_078858_2_1_6"/>
<dbReference type="GO" id="GO:0022625">
    <property type="term" value="C:cytosolic large ribosomal subunit"/>
    <property type="evidence" value="ECO:0007669"/>
    <property type="project" value="TreeGrafter"/>
</dbReference>
<dbReference type="GO" id="GO:0019843">
    <property type="term" value="F:rRNA binding"/>
    <property type="evidence" value="ECO:0007669"/>
    <property type="project" value="UniProtKB-UniRule"/>
</dbReference>
<dbReference type="GO" id="GO:0003735">
    <property type="term" value="F:structural constituent of ribosome"/>
    <property type="evidence" value="ECO:0007669"/>
    <property type="project" value="InterPro"/>
</dbReference>
<dbReference type="GO" id="GO:0000049">
    <property type="term" value="F:tRNA binding"/>
    <property type="evidence" value="ECO:0007669"/>
    <property type="project" value="UniProtKB-KW"/>
</dbReference>
<dbReference type="GO" id="GO:0006412">
    <property type="term" value="P:translation"/>
    <property type="evidence" value="ECO:0007669"/>
    <property type="project" value="UniProtKB-UniRule"/>
</dbReference>
<dbReference type="CDD" id="cd01433">
    <property type="entry name" value="Ribosomal_L16_L10e"/>
    <property type="match status" value="1"/>
</dbReference>
<dbReference type="FunFam" id="3.90.1170.10:FF:000001">
    <property type="entry name" value="50S ribosomal protein L16"/>
    <property type="match status" value="1"/>
</dbReference>
<dbReference type="Gene3D" id="3.90.1170.10">
    <property type="entry name" value="Ribosomal protein L10e/L16"/>
    <property type="match status" value="1"/>
</dbReference>
<dbReference type="HAMAP" id="MF_01342">
    <property type="entry name" value="Ribosomal_uL16"/>
    <property type="match status" value="1"/>
</dbReference>
<dbReference type="InterPro" id="IPR047873">
    <property type="entry name" value="Ribosomal_uL16"/>
</dbReference>
<dbReference type="InterPro" id="IPR000114">
    <property type="entry name" value="Ribosomal_uL16_bact-type"/>
</dbReference>
<dbReference type="InterPro" id="IPR020798">
    <property type="entry name" value="Ribosomal_uL16_CS"/>
</dbReference>
<dbReference type="InterPro" id="IPR016180">
    <property type="entry name" value="Ribosomal_uL16_dom"/>
</dbReference>
<dbReference type="InterPro" id="IPR036920">
    <property type="entry name" value="Ribosomal_uL16_sf"/>
</dbReference>
<dbReference type="NCBIfam" id="TIGR01164">
    <property type="entry name" value="rplP_bact"/>
    <property type="match status" value="1"/>
</dbReference>
<dbReference type="PANTHER" id="PTHR12220">
    <property type="entry name" value="50S/60S RIBOSOMAL PROTEIN L16"/>
    <property type="match status" value="1"/>
</dbReference>
<dbReference type="PANTHER" id="PTHR12220:SF13">
    <property type="entry name" value="LARGE RIBOSOMAL SUBUNIT PROTEIN UL16M"/>
    <property type="match status" value="1"/>
</dbReference>
<dbReference type="Pfam" id="PF00252">
    <property type="entry name" value="Ribosomal_L16"/>
    <property type="match status" value="1"/>
</dbReference>
<dbReference type="PRINTS" id="PR00060">
    <property type="entry name" value="RIBOSOMALL16"/>
</dbReference>
<dbReference type="SUPFAM" id="SSF54686">
    <property type="entry name" value="Ribosomal protein L16p/L10e"/>
    <property type="match status" value="1"/>
</dbReference>
<dbReference type="PROSITE" id="PS00586">
    <property type="entry name" value="RIBOSOMAL_L16_1"/>
    <property type="match status" value="1"/>
</dbReference>
<dbReference type="PROSITE" id="PS00701">
    <property type="entry name" value="RIBOSOMAL_L16_2"/>
    <property type="match status" value="1"/>
</dbReference>
<sequence length="136" mass="15232">MLQPKRTKFRKVHKGRNRGIASGTEVSFGTYGLKAVGRCRLTARQIEAARRAMSRAVKRQGKIWIRVFPDKPITEKPLEVRMGKGKGNVEYWVALIQPGKVLYEMDGVSEEVARNAFALAAAKLPVKTTFVTKTVM</sequence>
<comment type="function">
    <text evidence="1">Binds 23S rRNA and is also seen to make contacts with the A and possibly P site tRNAs.</text>
</comment>
<comment type="subunit">
    <text evidence="1">Part of the 50S ribosomal subunit.</text>
</comment>
<comment type="similarity">
    <text evidence="1">Belongs to the universal ribosomal protein uL16 family.</text>
</comment>
<keyword id="KW-0687">Ribonucleoprotein</keyword>
<keyword id="KW-0689">Ribosomal protein</keyword>
<keyword id="KW-0694">RNA-binding</keyword>
<keyword id="KW-0699">rRNA-binding</keyword>
<keyword id="KW-0820">tRNA-binding</keyword>
<name>RL16_HAEIE</name>
<proteinExistence type="inferred from homology"/>
<reference key="1">
    <citation type="journal article" date="2007" name="Genome Biol.">
        <title>Characterization and modeling of the Haemophilus influenzae core and supragenomes based on the complete genomic sequences of Rd and 12 clinical nontypeable strains.</title>
        <authorList>
            <person name="Hogg J.S."/>
            <person name="Hu F.Z."/>
            <person name="Janto B."/>
            <person name="Boissy R."/>
            <person name="Hayes J."/>
            <person name="Keefe R."/>
            <person name="Post J.C."/>
            <person name="Ehrlich G.D."/>
        </authorList>
    </citation>
    <scope>NUCLEOTIDE SEQUENCE [LARGE SCALE GENOMIC DNA]</scope>
    <source>
        <strain>PittEE</strain>
    </source>
</reference>
<protein>
    <recommendedName>
        <fullName evidence="1">Large ribosomal subunit protein uL16</fullName>
    </recommendedName>
    <alternativeName>
        <fullName evidence="2">50S ribosomal protein L16</fullName>
    </alternativeName>
</protein>
<evidence type="ECO:0000255" key="1">
    <source>
        <dbReference type="HAMAP-Rule" id="MF_01342"/>
    </source>
</evidence>
<evidence type="ECO:0000305" key="2"/>